<keyword id="KW-0002">3D-structure</keyword>
<keyword id="KW-0025">Alternative splicing</keyword>
<keyword id="KW-0067">ATP-binding</keyword>
<keyword id="KW-0175">Coiled coil</keyword>
<keyword id="KW-0963">Cytoplasm</keyword>
<keyword id="KW-0433">Leucine-rich repeat</keyword>
<keyword id="KW-0547">Nucleotide-binding</keyword>
<keyword id="KW-0611">Plant defense</keyword>
<keyword id="KW-0677">Repeat</keyword>
<comment type="function">
    <text evidence="4 5 6 7">Disease resistance (R) protein that recognizes the AVR-Pia and AVR1-CO39 effector avirulence proteins from M.oryzae. Resistance proteins guard the plant against pathogens that contain an appropriate avirulence protein via an indirect interaction with this avirulence protein. That triggers a defense system including the hypersensitive response, which restricts the pathogen growth. Contribution of RGA4 is required to recognize the effector avirulence proteins AVR-Pia and AVR1-CO39 from M.oryzae (PubMed:21251109, PubMed:23548743). Acts as a repressor of the RGA4-mediated cell death activation. Upon infection, recognition and binding of the AVR effectors relieve the RGA5-mediated repression and triggers the hypersensitive response (PubMed:25024433). Immune response triggered by the RGA4-RGA5 -mediated recognition of AVR1-CO39 confers resistance to X.oryzae pathovars (PubMed:27289079).</text>
</comment>
<comment type="subunit">
    <text evidence="5 6 8">Forms homodimer or heterodimer with RGA4 through its coiled coil (CC) domain (PubMed:25024433). Interacts with AVR1-Pia and AVR-CO39 through its C-terminal part containing the HMA-like domain (PubMed:23548743, PubMed:28087830).</text>
</comment>
<comment type="subcellular location">
    <subcellularLocation>
        <location evidence="6">Cytoplasm</location>
    </subcellularLocation>
</comment>
<comment type="alternative products">
    <event type="alternative splicing"/>
    <isoform>
        <id>F7J0N2-1</id>
        <name>1</name>
        <name evidence="9 10">RGA5-A</name>
        <sequence type="displayed"/>
    </isoform>
    <isoform>
        <id>F7J0N2-2</id>
        <name>2</name>
        <name evidence="10">RGA5-B</name>
        <sequence type="described" ref="VSP_059636 VSP_059637"/>
    </isoform>
</comment>
<comment type="tissue specificity">
    <text evidence="4">Expressed in leaves.</text>
</comment>
<comment type="domain">
    <text evidence="5 8">The HMA-like (RATX1) domain is responsible for the specific recognition of AVR effectors.</text>
</comment>
<comment type="similarity">
    <text evidence="11">Belongs to the disease resistance NB-LRR family.</text>
</comment>
<feature type="chain" id="PRO_0000444661" description="Disease resistance protein RGA5">
    <location>
        <begin position="1"/>
        <end position="1116"/>
    </location>
</feature>
<feature type="domain" description="NB-ARC" evidence="1">
    <location>
        <begin position="182"/>
        <end position="466"/>
    </location>
</feature>
<feature type="repeat" description="LRR 1" evidence="1">
    <location>
        <begin position="608"/>
        <end position="631"/>
    </location>
</feature>
<feature type="repeat" description="LRR 2" evidence="1">
    <location>
        <begin position="633"/>
        <end position="653"/>
    </location>
</feature>
<feature type="repeat" description="LRR 3" evidence="1">
    <location>
        <begin position="654"/>
        <end position="675"/>
    </location>
</feature>
<feature type="repeat" description="LRR 4" evidence="1">
    <location>
        <begin position="677"/>
        <end position="701"/>
    </location>
</feature>
<feature type="repeat" description="LRR 5" evidence="1">
    <location>
        <begin position="732"/>
        <end position="755"/>
    </location>
</feature>
<feature type="repeat" description="LRR 6" evidence="1">
    <location>
        <begin position="786"/>
        <end position="808"/>
    </location>
</feature>
<feature type="repeat" description="LRR 7" evidence="1">
    <location>
        <begin position="810"/>
        <end position="830"/>
    </location>
</feature>
<feature type="repeat" description="LRR 8" evidence="1">
    <location>
        <begin position="835"/>
        <end position="857"/>
    </location>
</feature>
<feature type="repeat" description="LRR 9" evidence="1">
    <location>
        <begin position="858"/>
        <end position="882"/>
    </location>
</feature>
<feature type="domain" description="HMA" evidence="2">
    <location>
        <begin position="997"/>
        <end position="1066"/>
    </location>
</feature>
<feature type="region of interest" description="Structured coiled coil (CC) domain" evidence="10">
    <location>
        <begin position="1"/>
        <end position="177"/>
    </location>
</feature>
<feature type="region of interest" description="Disordered" evidence="3">
    <location>
        <begin position="935"/>
        <end position="971"/>
    </location>
</feature>
<feature type="region of interest" description="HMA-like domain" evidence="5 9">
    <location>
        <begin position="1000"/>
        <end position="1070"/>
    </location>
</feature>
<feature type="compositionally biased region" description="Basic and acidic residues" evidence="3">
    <location>
        <begin position="958"/>
        <end position="971"/>
    </location>
</feature>
<feature type="splice variant" id="VSP_059636" description="In isoform 2.">
    <original>VDSVEITGEDKDRLVVVGRGIDPVRLVALLREKCGLAELLMVELVEK</original>
    <variation>KSAQIYSSGCAVLISTPTSLCLYACRGGQRGDNGGGQRPAGGGRPWH</variation>
    <location>
        <begin position="1025"/>
        <end position="1071"/>
    </location>
</feature>
<feature type="splice variant" id="VSP_059637" description="In isoform 2.">
    <location>
        <begin position="1072"/>
        <end position="1116"/>
    </location>
</feature>
<feature type="turn" evidence="16">
    <location>
        <begin position="992"/>
        <end position="995"/>
    </location>
</feature>
<feature type="strand" evidence="17">
    <location>
        <begin position="997"/>
        <end position="1004"/>
    </location>
</feature>
<feature type="helix" evidence="17">
    <location>
        <begin position="1009"/>
        <end position="1021"/>
    </location>
</feature>
<feature type="strand" evidence="17">
    <location>
        <begin position="1025"/>
        <end position="1032"/>
    </location>
</feature>
<feature type="strand" evidence="17">
    <location>
        <begin position="1037"/>
        <end position="1044"/>
    </location>
</feature>
<feature type="helix" evidence="17">
    <location>
        <begin position="1047"/>
        <end position="1058"/>
    </location>
</feature>
<feature type="strand" evidence="17">
    <location>
        <begin position="1061"/>
        <end position="1068"/>
    </location>
</feature>
<dbReference type="EMBL" id="AB604626">
    <property type="protein sequence ID" value="BAK39926.1"/>
    <property type="molecule type" value="Genomic_DNA"/>
</dbReference>
<dbReference type="EMBL" id="AB604626">
    <property type="protein sequence ID" value="BAK39927.1"/>
    <property type="molecule type" value="Genomic_DNA"/>
</dbReference>
<dbReference type="EMBL" id="AB604627">
    <property type="protein sequence ID" value="BAK39930.1"/>
    <property type="molecule type" value="mRNA"/>
</dbReference>
<dbReference type="EMBL" id="KC777365">
    <property type="protein sequence ID" value="AGM61351.1"/>
    <property type="molecule type" value="mRNA"/>
</dbReference>
<dbReference type="PDB" id="5ZNE">
    <property type="method" value="X-ray"/>
    <property type="resolution" value="1.78 A"/>
    <property type="chains" value="A=982-1116"/>
</dbReference>
<dbReference type="PDB" id="5ZNG">
    <property type="method" value="X-ray"/>
    <property type="resolution" value="2.19 A"/>
    <property type="chains" value="A=982-1116"/>
</dbReference>
<dbReference type="PDB" id="7DV8">
    <property type="method" value="X-ray"/>
    <property type="resolution" value="2.45 A"/>
    <property type="chains" value="A/B/C/D/E/F/G/H/I/J/K/L/M/N=997-1069"/>
</dbReference>
<dbReference type="PDB" id="7DVG">
    <property type="method" value="X-ray"/>
    <property type="resolution" value="2.80 A"/>
    <property type="chains" value="A/B=997-1069"/>
</dbReference>
<dbReference type="PDB" id="8B2R">
    <property type="method" value="X-ray"/>
    <property type="resolution" value="1.22 A"/>
    <property type="chains" value="A=997-1071"/>
</dbReference>
<dbReference type="PDBsum" id="5ZNE"/>
<dbReference type="PDBsum" id="5ZNG"/>
<dbReference type="PDBsum" id="7DV8"/>
<dbReference type="PDBsum" id="7DVG"/>
<dbReference type="PDBsum" id="8B2R"/>
<dbReference type="SMR" id="F7J0N2"/>
<dbReference type="GO" id="GO:0005737">
    <property type="term" value="C:cytoplasm"/>
    <property type="evidence" value="ECO:0000314"/>
    <property type="project" value="UniProtKB"/>
</dbReference>
<dbReference type="GO" id="GO:0043531">
    <property type="term" value="F:ADP binding"/>
    <property type="evidence" value="ECO:0007669"/>
    <property type="project" value="InterPro"/>
</dbReference>
<dbReference type="GO" id="GO:0005524">
    <property type="term" value="F:ATP binding"/>
    <property type="evidence" value="ECO:0007669"/>
    <property type="project" value="UniProtKB-KW"/>
</dbReference>
<dbReference type="GO" id="GO:0046872">
    <property type="term" value="F:metal ion binding"/>
    <property type="evidence" value="ECO:0007669"/>
    <property type="project" value="InterPro"/>
</dbReference>
<dbReference type="GO" id="GO:0042742">
    <property type="term" value="P:defense response to bacterium"/>
    <property type="evidence" value="ECO:0000314"/>
    <property type="project" value="UniProtKB"/>
</dbReference>
<dbReference type="GO" id="GO:0002758">
    <property type="term" value="P:innate immune response-activating signaling pathway"/>
    <property type="evidence" value="ECO:0000314"/>
    <property type="project" value="UniProtKB"/>
</dbReference>
<dbReference type="GO" id="GO:0009626">
    <property type="term" value="P:plant-type hypersensitive response"/>
    <property type="evidence" value="ECO:0000315"/>
    <property type="project" value="UniProtKB"/>
</dbReference>
<dbReference type="FunFam" id="3.40.50.300:FF:001635">
    <property type="entry name" value="Disease resistance protein Pik-2"/>
    <property type="match status" value="1"/>
</dbReference>
<dbReference type="FunFam" id="3.30.70.100:FF:000095">
    <property type="entry name" value="Disease resistance protein RGA5"/>
    <property type="match status" value="1"/>
</dbReference>
<dbReference type="FunFam" id="1.10.10.10:FF:000322">
    <property type="entry name" value="Probable disease resistance protein At1g63360"/>
    <property type="match status" value="1"/>
</dbReference>
<dbReference type="Gene3D" id="1.20.5.4130">
    <property type="match status" value="1"/>
</dbReference>
<dbReference type="Gene3D" id="3.30.70.100">
    <property type="match status" value="1"/>
</dbReference>
<dbReference type="Gene3D" id="1.10.8.430">
    <property type="entry name" value="Helical domain of apoptotic protease-activating factors"/>
    <property type="match status" value="1"/>
</dbReference>
<dbReference type="Gene3D" id="3.40.50.300">
    <property type="entry name" value="P-loop containing nucleotide triphosphate hydrolases"/>
    <property type="match status" value="1"/>
</dbReference>
<dbReference type="Gene3D" id="3.80.10.10">
    <property type="entry name" value="Ribonuclease Inhibitor"/>
    <property type="match status" value="1"/>
</dbReference>
<dbReference type="InterPro" id="IPR042197">
    <property type="entry name" value="Apaf_helical"/>
</dbReference>
<dbReference type="InterPro" id="IPR044974">
    <property type="entry name" value="Disease_R_plants"/>
</dbReference>
<dbReference type="InterPro" id="IPR006121">
    <property type="entry name" value="HMA_dom"/>
</dbReference>
<dbReference type="InterPro" id="IPR032675">
    <property type="entry name" value="LRR_dom_sf"/>
</dbReference>
<dbReference type="InterPro" id="IPR055414">
    <property type="entry name" value="LRR_R13L4/SHOC2-like"/>
</dbReference>
<dbReference type="InterPro" id="IPR002182">
    <property type="entry name" value="NB-ARC"/>
</dbReference>
<dbReference type="InterPro" id="IPR027417">
    <property type="entry name" value="P-loop_NTPase"/>
</dbReference>
<dbReference type="InterPro" id="IPR041118">
    <property type="entry name" value="Rx_N"/>
</dbReference>
<dbReference type="PANTHER" id="PTHR23155:SF1198">
    <property type="entry name" value="DISEASE RESISTANCE PROTEIN RGA5"/>
    <property type="match status" value="1"/>
</dbReference>
<dbReference type="PANTHER" id="PTHR23155">
    <property type="entry name" value="DISEASE RESISTANCE PROTEIN RP"/>
    <property type="match status" value="1"/>
</dbReference>
<dbReference type="Pfam" id="PF23598">
    <property type="entry name" value="LRR_14"/>
    <property type="match status" value="1"/>
</dbReference>
<dbReference type="Pfam" id="PF00931">
    <property type="entry name" value="NB-ARC"/>
    <property type="match status" value="1"/>
</dbReference>
<dbReference type="Pfam" id="PF18052">
    <property type="entry name" value="Rx_N"/>
    <property type="match status" value="1"/>
</dbReference>
<dbReference type="Pfam" id="PF23559">
    <property type="entry name" value="WH_DRP"/>
    <property type="match status" value="1"/>
</dbReference>
<dbReference type="PRINTS" id="PR00364">
    <property type="entry name" value="DISEASERSIST"/>
</dbReference>
<dbReference type="SUPFAM" id="SSF52058">
    <property type="entry name" value="L domain-like"/>
    <property type="match status" value="1"/>
</dbReference>
<dbReference type="SUPFAM" id="SSF52540">
    <property type="entry name" value="P-loop containing nucleoside triphosphate hydrolases"/>
    <property type="match status" value="1"/>
</dbReference>
<dbReference type="PROSITE" id="PS50846">
    <property type="entry name" value="HMA_2"/>
    <property type="match status" value="1"/>
</dbReference>
<accession>F7J0N2</accession>
<accession>F7J0M8</accession>
<accession>F7J0M9</accession>
<accession>R9RW76</accession>
<evidence type="ECO:0000255" key="1"/>
<evidence type="ECO:0000255" key="2">
    <source>
        <dbReference type="PROSITE-ProRule" id="PRU00280"/>
    </source>
</evidence>
<evidence type="ECO:0000256" key="3">
    <source>
        <dbReference type="SAM" id="MobiDB-lite"/>
    </source>
</evidence>
<evidence type="ECO:0000269" key="4">
    <source>
    </source>
</evidence>
<evidence type="ECO:0000269" key="5">
    <source>
    </source>
</evidence>
<evidence type="ECO:0000269" key="6">
    <source>
    </source>
</evidence>
<evidence type="ECO:0000269" key="7">
    <source>
    </source>
</evidence>
<evidence type="ECO:0000269" key="8">
    <source>
    </source>
</evidence>
<evidence type="ECO:0000303" key="9">
    <source>
    </source>
</evidence>
<evidence type="ECO:0000303" key="10">
    <source>
    </source>
</evidence>
<evidence type="ECO:0000305" key="11"/>
<evidence type="ECO:0000312" key="12">
    <source>
        <dbReference type="EMBL" id="AGM61351.1"/>
    </source>
</evidence>
<evidence type="ECO:0000312" key="13">
    <source>
        <dbReference type="EMBL" id="BAK39926.1"/>
    </source>
</evidence>
<evidence type="ECO:0000312" key="14">
    <source>
        <dbReference type="EMBL" id="BAK39927.1"/>
    </source>
</evidence>
<evidence type="ECO:0000312" key="15">
    <source>
        <dbReference type="EMBL" id="BAK39930.1"/>
    </source>
</evidence>
<evidence type="ECO:0007829" key="16">
    <source>
        <dbReference type="PDB" id="5ZNG"/>
    </source>
</evidence>
<evidence type="ECO:0007829" key="17">
    <source>
        <dbReference type="PDB" id="8B2R"/>
    </source>
</evidence>
<reference key="1">
    <citation type="journal article" date="2011" name="Plant J.">
        <title>A multifaceted genomics approach allows the isolation of the rice Pia-blast resistance gene consisting of two adjacent NBS-LRR protein genes.</title>
        <authorList>
            <person name="Okuyama Y."/>
            <person name="Kanzaki H."/>
            <person name="Abe A."/>
            <person name="Yoshida K."/>
            <person name="Tamiru M."/>
            <person name="Saitoh H."/>
            <person name="Fujibe T."/>
            <person name="Matsumura H."/>
            <person name="Shenton M."/>
            <person name="Galam D.C."/>
            <person name="Undan J."/>
            <person name="Ito A."/>
            <person name="Sone T."/>
            <person name="Terauchi R."/>
        </authorList>
    </citation>
    <scope>NUCLEOTIDE SEQUENCE [GENOMIC DNA / MRNA] (ISOFORM 1)</scope>
    <scope>FUNCTION</scope>
    <scope>TISSUE SPECIFICITY</scope>
    <source>
        <strain evidence="15">cv. Aichi asahi</strain>
        <strain evidence="13 14 15">cv. Sasanishiki</strain>
        <tissue evidence="13 14 15">Leaf</tissue>
    </source>
</reference>
<reference key="2">
    <citation type="journal article" date="2013" name="Plant Cell">
        <title>The rice resistance protein pair RGA4/RGA5 recognizes the Magnaporthe oryzae effectors AVR-Pia and AVR1-CO39 by direct binding.</title>
        <authorList>
            <person name="Cesari S."/>
            <person name="Thilliez G."/>
            <person name="Ribot C."/>
            <person name="Chalvon V."/>
            <person name="Michel C."/>
            <person name="Jauneau A."/>
            <person name="Rivas S."/>
            <person name="Alaux L."/>
            <person name="Kanzaki H."/>
            <person name="Okuyama Y."/>
            <person name="Morel J.B."/>
            <person name="Fournier E."/>
            <person name="Tharreau D."/>
            <person name="Terauchi R."/>
            <person name="Kroj T."/>
        </authorList>
    </citation>
    <scope>NUCLEOTIDE SEQUENCE [MRNA] (ISOFORM 2)</scope>
    <scope>ALTERNATIVE SPLICING</scope>
    <scope>FUNCTION</scope>
    <scope>INTERACTION WITH AVR1-CO39 AND AVR-PIA</scope>
    <scope>DOMAIN</scope>
    <source>
        <strain evidence="12">cv. Sasanishiki</strain>
        <tissue evidence="12">Leaf</tissue>
    </source>
</reference>
<reference key="3">
    <citation type="journal article" date="2014" name="EMBO J.">
        <title>The NB-LRR proteins RGA4 and RGA5 interact functionally and physically to confer disease resistance.</title>
        <authorList>
            <person name="Cesari S."/>
            <person name="Kanzaki H."/>
            <person name="Fujiwara T."/>
            <person name="Bernoux M."/>
            <person name="Chalvon V."/>
            <person name="Kawano Y."/>
            <person name="Shimamoto K."/>
            <person name="Dodds P."/>
            <person name="Terauchi R."/>
            <person name="Kroj T."/>
        </authorList>
    </citation>
    <scope>INTERACTION WITH RGA4</scope>
    <scope>SUBUNIT</scope>
    <scope>FUNCTION</scope>
    <scope>SUBCELLULAR LOCATION</scope>
    <source>
        <strain>cv. Sasanishiki</strain>
    </source>
</reference>
<reference key="4">
    <citation type="journal article" date="2014" name="Front. Plant Sci.">
        <title>A novel conserved mechanism for plant NLR protein pairs: the 'integrated decoy' hypothesis.</title>
        <authorList>
            <person name="Cesari S."/>
            <person name="Bernoux M."/>
            <person name="Moncuquet P."/>
            <person name="Kroj T."/>
            <person name="Dodds P.N."/>
        </authorList>
    </citation>
    <scope>REVIEW</scope>
</reference>
<reference key="5">
    <citation type="journal article" date="2016" name="Plant J.">
        <title>Ectopic activation of the rice NLR heteropair RGA4/RGA5 confers resistance to bacterial blight and bacterial leaf streak diseases.</title>
        <authorList>
            <person name="Hutin M."/>
            <person name="Cesari S."/>
            <person name="Chalvon V."/>
            <person name="Michel C."/>
            <person name="Tran T.T."/>
            <person name="Boch J."/>
            <person name="Koebnik R."/>
            <person name="Szurek B."/>
            <person name="Kroj T."/>
        </authorList>
    </citation>
    <scope>FUNCTION</scope>
    <source>
        <strain>cv. Kitaake</strain>
    </source>
</reference>
<reference key="6">
    <citation type="journal article" date="2017" name="Plant Cell">
        <title>Effector AVR-Pia by the decoy domain of the rice NLR immune receptor RGA5.</title>
        <authorList>
            <person name="Ortiz D."/>
            <person name="de Guillen K."/>
            <person name="Cesari S."/>
            <person name="Chalvon V."/>
            <person name="Gracy J."/>
            <person name="Padilla A."/>
            <person name="Kroj T."/>
        </authorList>
    </citation>
    <scope>INTERACTION WITH AVR-PIA</scope>
    <scope>DOMAIN</scope>
</reference>
<reference key="7">
    <citation type="journal article" date="2015" name="Acta Crystallogr. F Struct. Biol. Commun.">
        <title>Expression, purification, crystallization and preliminary X-ray diffraction analysis of the effector-interaction domain of the resistance protein RGA5-A from Oryza sativa L. japonica.</title>
        <authorList>
            <person name="Huang D."/>
            <person name="Zhang Y."/>
            <person name="Zhao Y."/>
            <person name="Liu J."/>
            <person name="Peng Y.L."/>
        </authorList>
    </citation>
    <scope>X-RAY CRYSTALLOGRAPHY (2.43 ANGSTROMS) OF 982-1116</scope>
</reference>
<reference key="8">
    <citation type="journal article" date="2018" name="Acta Crystallogr. F Struct. Biol. Commun.">
        <title>Crystallization of the rice immune receptor RGA5A_S with the rice blast fungus effector AVR1-CO39 prepared via mixture and tandem strategies.</title>
        <authorList>
            <person name="Guo L."/>
            <person name="Zhang Y."/>
            <person name="Ma M."/>
            <person name="Liu Q."/>
            <person name="Zhang Y."/>
            <person name="Peng Y."/>
            <person name="Liu J."/>
        </authorList>
    </citation>
    <scope>X-RAY CRYSTALLOGRAPHY (2.4 ANGSTROMS) OF 982-1116 IN COMPLEX WITH THE EFFECTOR AVR1-CO39</scope>
</reference>
<sequence length="1116" mass="124448">MDAPASFSLGAMGPLLRKLDSLLVAPEIRLPKPLKEGIELLKEDLEEIGVSLVEHSVVDSPTHKARFWMDEVRDLSYHIEDCIDTMFSMRSGGDDGKPRSERRHKVGRAKIDGFSKKPKPCTRMARIAELRALVREASERLERYQLGDVCGSSSPVVFTADGRARPLHHGVSANLVGVDEFKTKLNRWLSDEEGPHLKVAAIVGPAGIGKTALATELYRDHRWQFECRAFVRASRKPDMQRLLGGILSQVQRRQRSSDAYADSTVQSLIDNLREHLQDRRYLIIIDGLWETAVWNIANSAFPDVNSFSRILITADIEQVALECCGYKYDYIMRMEPLGSLDSKKVFFNKVFGSEDQCPPELKEVSNTILEKCGGLPLAIISIAGLLGSQPENPVLWDYVTKYLCSSLGTNPTLKDVVKETLNLSYNSLPHPFKTCLLYLGMYPDGHIMLKADLMKQWSAEGFVSANEAKDTEEIVDKYFDELVNRGILEPVEINKNGKVLSCTLHHAVHDLVMPKFNDDKFTMSVDYSQTITGPSTMVRRLSLHFSSTRYATKPAGIILSRVRSLAFFGLLNCMPCIGEFKLLRVLILEFWGSHGEQRSLNLIPVCRLFQLRYLKTSGDVVVQLPAQISGLQYLETLEIDARVSAVPFDLVHLPNLLHLQLQDETKLPDGIGCMRSLRTLQYFDLGNNSVDNLRGLGELTNLQDLHLSYSAPSSNEGLMINLNAITSSLSRLSNLKSLILSPGAISMVIFFDISSIISVVPVFLQRLELLPPICIFCRLPKSIGQLHKLCILKVSVRELLTTDIDNLTGLPSLTVLSLYAQTAPEGRFIFKDGTLPVLKYFKFGCGELCLAFMAGAMPNLQRLKLVFNIRKSEKYRHTLFGIEHLVSLQDIATRIGVDTSTGESDRRAAESAFKETVNKHPRCLRSSLQWVVSTEEESHPLEKQHHKREKGSSAGHGVLEKESVEDSEKNTDRVQTLLSPQLSNMESVVESALTGQRTKIVVKVHMPCGKSRAKAMALAASVNGVDSVEITGEDKDRLVVVGRGIDPVRLVALLREKCGLAELLMVELVEKEKTQLAGGKKGAYKKHPTYNLSPFDYVEYPPSAPIMQDINPCSTM</sequence>
<name>RGA5R_ORYSJ</name>
<organism>
    <name type="scientific">Oryza sativa subsp. japonica</name>
    <name type="common">Rice</name>
    <dbReference type="NCBI Taxonomy" id="39947"/>
    <lineage>
        <taxon>Eukaryota</taxon>
        <taxon>Viridiplantae</taxon>
        <taxon>Streptophyta</taxon>
        <taxon>Embryophyta</taxon>
        <taxon>Tracheophyta</taxon>
        <taxon>Spermatophyta</taxon>
        <taxon>Magnoliopsida</taxon>
        <taxon>Liliopsida</taxon>
        <taxon>Poales</taxon>
        <taxon>Poaceae</taxon>
        <taxon>BOP clade</taxon>
        <taxon>Oryzoideae</taxon>
        <taxon>Oryzeae</taxon>
        <taxon>Oryzinae</taxon>
        <taxon>Oryza</taxon>
        <taxon>Oryza sativa</taxon>
    </lineage>
</organism>
<proteinExistence type="evidence at protein level"/>
<protein>
    <recommendedName>
        <fullName evidence="11">Disease resistance protein RGA5</fullName>
    </recommendedName>
    <alternativeName>
        <fullName evidence="15">Os11gRGA5</fullName>
    </alternativeName>
    <alternativeName>
        <fullName evidence="9">SasRGA5</fullName>
    </alternativeName>
</protein>
<gene>
    <name evidence="9" type="primary">RGA5</name>
</gene>